<keyword id="KW-0012">Acyltransferase</keyword>
<keyword id="KW-0963">Cytoplasm</keyword>
<keyword id="KW-0441">Lipid A biosynthesis</keyword>
<keyword id="KW-0444">Lipid biosynthesis</keyword>
<keyword id="KW-0443">Lipid metabolism</keyword>
<keyword id="KW-0677">Repeat</keyword>
<keyword id="KW-0808">Transferase</keyword>
<name>LPXA_SALG2</name>
<dbReference type="EC" id="2.3.1.129" evidence="1"/>
<dbReference type="EMBL" id="AM933173">
    <property type="protein sequence ID" value="CAR36139.1"/>
    <property type="molecule type" value="Genomic_DNA"/>
</dbReference>
<dbReference type="RefSeq" id="WP_000565950.1">
    <property type="nucleotide sequence ID" value="NC_011274.1"/>
</dbReference>
<dbReference type="SMR" id="B5RHG6"/>
<dbReference type="KEGG" id="seg:SG0232"/>
<dbReference type="HOGENOM" id="CLU_061249_0_0_6"/>
<dbReference type="UniPathway" id="UPA00359">
    <property type="reaction ID" value="UER00477"/>
</dbReference>
<dbReference type="Proteomes" id="UP000008321">
    <property type="component" value="Chromosome"/>
</dbReference>
<dbReference type="GO" id="GO:0005737">
    <property type="term" value="C:cytoplasm"/>
    <property type="evidence" value="ECO:0007669"/>
    <property type="project" value="UniProtKB-SubCell"/>
</dbReference>
<dbReference type="GO" id="GO:0016020">
    <property type="term" value="C:membrane"/>
    <property type="evidence" value="ECO:0007669"/>
    <property type="project" value="GOC"/>
</dbReference>
<dbReference type="GO" id="GO:0008780">
    <property type="term" value="F:acyl-[acyl-carrier-protein]-UDP-N-acetylglucosamine O-acyltransferase activity"/>
    <property type="evidence" value="ECO:0007669"/>
    <property type="project" value="UniProtKB-UniRule"/>
</dbReference>
<dbReference type="GO" id="GO:0009245">
    <property type="term" value="P:lipid A biosynthetic process"/>
    <property type="evidence" value="ECO:0007669"/>
    <property type="project" value="UniProtKB-UniRule"/>
</dbReference>
<dbReference type="CDD" id="cd03351">
    <property type="entry name" value="LbH_UDP-GlcNAc_AT"/>
    <property type="match status" value="1"/>
</dbReference>
<dbReference type="FunFam" id="2.160.10.10:FF:000003">
    <property type="entry name" value="Acyl-[acyl-carrier-protein]--UDP-N-acetylglucosamine O-acyltransferase"/>
    <property type="match status" value="1"/>
</dbReference>
<dbReference type="Gene3D" id="2.160.10.10">
    <property type="entry name" value="Hexapeptide repeat proteins"/>
    <property type="match status" value="1"/>
</dbReference>
<dbReference type="Gene3D" id="1.20.1180.10">
    <property type="entry name" value="Udp N-acetylglucosamine O-acyltransferase, C-terminal domain"/>
    <property type="match status" value="1"/>
</dbReference>
<dbReference type="HAMAP" id="MF_00387">
    <property type="entry name" value="LpxA"/>
    <property type="match status" value="1"/>
</dbReference>
<dbReference type="InterPro" id="IPR029098">
    <property type="entry name" value="Acetyltransf_C"/>
</dbReference>
<dbReference type="InterPro" id="IPR037157">
    <property type="entry name" value="Acetyltransf_C_sf"/>
</dbReference>
<dbReference type="InterPro" id="IPR001451">
    <property type="entry name" value="Hexapep"/>
</dbReference>
<dbReference type="InterPro" id="IPR018357">
    <property type="entry name" value="Hexapep_transf_CS"/>
</dbReference>
<dbReference type="InterPro" id="IPR010137">
    <property type="entry name" value="Lipid_A_LpxA"/>
</dbReference>
<dbReference type="InterPro" id="IPR011004">
    <property type="entry name" value="Trimer_LpxA-like_sf"/>
</dbReference>
<dbReference type="NCBIfam" id="TIGR01852">
    <property type="entry name" value="lipid_A_lpxA"/>
    <property type="match status" value="1"/>
</dbReference>
<dbReference type="NCBIfam" id="NF003657">
    <property type="entry name" value="PRK05289.1"/>
    <property type="match status" value="1"/>
</dbReference>
<dbReference type="PANTHER" id="PTHR43480">
    <property type="entry name" value="ACYL-[ACYL-CARRIER-PROTEIN]--UDP-N-ACETYLGLUCOSAMINE O-ACYLTRANSFERASE"/>
    <property type="match status" value="1"/>
</dbReference>
<dbReference type="PANTHER" id="PTHR43480:SF1">
    <property type="entry name" value="ACYL-[ACYL-CARRIER-PROTEIN]--UDP-N-ACETYLGLUCOSAMINE O-ACYLTRANSFERASE, MITOCHONDRIAL-RELATED"/>
    <property type="match status" value="1"/>
</dbReference>
<dbReference type="Pfam" id="PF13720">
    <property type="entry name" value="Acetyltransf_11"/>
    <property type="match status" value="1"/>
</dbReference>
<dbReference type="Pfam" id="PF00132">
    <property type="entry name" value="Hexapep"/>
    <property type="match status" value="2"/>
</dbReference>
<dbReference type="PIRSF" id="PIRSF000456">
    <property type="entry name" value="UDP-GlcNAc_acltr"/>
    <property type="match status" value="1"/>
</dbReference>
<dbReference type="SUPFAM" id="SSF51161">
    <property type="entry name" value="Trimeric LpxA-like enzymes"/>
    <property type="match status" value="1"/>
</dbReference>
<dbReference type="PROSITE" id="PS00101">
    <property type="entry name" value="HEXAPEP_TRANSFERASES"/>
    <property type="match status" value="2"/>
</dbReference>
<comment type="function">
    <text evidence="1">Involved in the biosynthesis of lipid A, a phosphorylated glycolipid that anchors the lipopolysaccharide to the outer membrane of the cell.</text>
</comment>
<comment type="catalytic activity">
    <reaction evidence="1">
        <text>a (3R)-hydroxyacyl-[ACP] + UDP-N-acetyl-alpha-D-glucosamine = a UDP-3-O-[(3R)-3-hydroxyacyl]-N-acetyl-alpha-D-glucosamine + holo-[ACP]</text>
        <dbReference type="Rhea" id="RHEA:67812"/>
        <dbReference type="Rhea" id="RHEA-COMP:9685"/>
        <dbReference type="Rhea" id="RHEA-COMP:9945"/>
        <dbReference type="ChEBI" id="CHEBI:57705"/>
        <dbReference type="ChEBI" id="CHEBI:64479"/>
        <dbReference type="ChEBI" id="CHEBI:78827"/>
        <dbReference type="ChEBI" id="CHEBI:173225"/>
        <dbReference type="EC" id="2.3.1.129"/>
    </reaction>
</comment>
<comment type="pathway">
    <text evidence="1">Glycolipid biosynthesis; lipid IV(A) biosynthesis; lipid IV(A) from (3R)-3-hydroxytetradecanoyl-[acyl-carrier-protein] and UDP-N-acetyl-alpha-D-glucosamine: step 1/6.</text>
</comment>
<comment type="subunit">
    <text evidence="1">Homotrimer.</text>
</comment>
<comment type="subcellular location">
    <subcellularLocation>
        <location evidence="1">Cytoplasm</location>
    </subcellularLocation>
</comment>
<comment type="similarity">
    <text evidence="1">Belongs to the transferase hexapeptide repeat family. LpxA subfamily.</text>
</comment>
<gene>
    <name evidence="1" type="primary">lpxA</name>
    <name type="ordered locus">SG0232</name>
</gene>
<feature type="chain" id="PRO_1000122728" description="Acyl-[acyl-carrier-protein]--UDP-N-acetylglucosamine O-acyltransferase">
    <location>
        <begin position="1"/>
        <end position="262"/>
    </location>
</feature>
<proteinExistence type="inferred from homology"/>
<organism>
    <name type="scientific">Salmonella gallinarum (strain 287/91 / NCTC 13346)</name>
    <dbReference type="NCBI Taxonomy" id="550538"/>
    <lineage>
        <taxon>Bacteria</taxon>
        <taxon>Pseudomonadati</taxon>
        <taxon>Pseudomonadota</taxon>
        <taxon>Gammaproteobacteria</taxon>
        <taxon>Enterobacterales</taxon>
        <taxon>Enterobacteriaceae</taxon>
        <taxon>Salmonella</taxon>
    </lineage>
</organism>
<accession>B5RHG6</accession>
<protein>
    <recommendedName>
        <fullName evidence="1">Acyl-[acyl-carrier-protein]--UDP-N-acetylglucosamine O-acyltransferase</fullName>
        <shortName evidence="1">UDP-N-acetylglucosamine acyltransferase</shortName>
        <ecNumber evidence="1">2.3.1.129</ecNumber>
    </recommendedName>
</protein>
<evidence type="ECO:0000255" key="1">
    <source>
        <dbReference type="HAMAP-Rule" id="MF_00387"/>
    </source>
</evidence>
<sequence length="262" mass="28089">MIDKSAFIHPTAIVEDGAVIGANAHIGPFCIVGPQVEIGEGTVLKSHVVVNGQTKIGRDNEIYQFASIGEVNQDLKYAGEPTRVEIGDRNRIRESVTIHRGTVQGGGLTKVGSDNLLMINAHVAHDCTVGNRCILANNATLAGHVSVDDFAIIGGMTAVHQFCIIGAHVMVGGCSGVAQDVPPYVIAQGNHATPFGVNIEGLKRRGFSREGLVAIRNAYKLLYRSGKTLDEAKLEIAELAEKHPEVKAFTEFFERSTRGPIR</sequence>
<reference key="1">
    <citation type="journal article" date="2008" name="Genome Res.">
        <title>Comparative genome analysis of Salmonella enteritidis PT4 and Salmonella gallinarum 287/91 provides insights into evolutionary and host adaptation pathways.</title>
        <authorList>
            <person name="Thomson N.R."/>
            <person name="Clayton D.J."/>
            <person name="Windhorst D."/>
            <person name="Vernikos G."/>
            <person name="Davidson S."/>
            <person name="Churcher C."/>
            <person name="Quail M.A."/>
            <person name="Stevens M."/>
            <person name="Jones M.A."/>
            <person name="Watson M."/>
            <person name="Barron A."/>
            <person name="Layton A."/>
            <person name="Pickard D."/>
            <person name="Kingsley R.A."/>
            <person name="Bignell A."/>
            <person name="Clark L."/>
            <person name="Harris B."/>
            <person name="Ormond D."/>
            <person name="Abdellah Z."/>
            <person name="Brooks K."/>
            <person name="Cherevach I."/>
            <person name="Chillingworth T."/>
            <person name="Woodward J."/>
            <person name="Norberczak H."/>
            <person name="Lord A."/>
            <person name="Arrowsmith C."/>
            <person name="Jagels K."/>
            <person name="Moule S."/>
            <person name="Mungall K."/>
            <person name="Saunders M."/>
            <person name="Whitehead S."/>
            <person name="Chabalgoity J.A."/>
            <person name="Maskell D."/>
            <person name="Humphreys T."/>
            <person name="Roberts M."/>
            <person name="Barrow P.A."/>
            <person name="Dougan G."/>
            <person name="Parkhill J."/>
        </authorList>
    </citation>
    <scope>NUCLEOTIDE SEQUENCE [LARGE SCALE GENOMIC DNA]</scope>
    <source>
        <strain>287/91 / NCTC 13346</strain>
    </source>
</reference>